<protein>
    <recommendedName>
        <fullName>Solute carrier family 25 member 33</fullName>
    </recommendedName>
    <alternativeName>
        <fullName>Bone marrow stromal cell mitochondrial carrier protein</fullName>
        <shortName>BMSC-MCP</shortName>
        <shortName>HuBMSC-MCP</shortName>
    </alternativeName>
    <alternativeName>
        <fullName>Protein PNC1</fullName>
    </alternativeName>
</protein>
<name>S2533_HUMAN</name>
<proteinExistence type="evidence at protein level"/>
<evidence type="ECO:0000255" key="1"/>
<evidence type="ECO:0000269" key="2">
    <source>
    </source>
</evidence>
<evidence type="ECO:0000269" key="3">
    <source>
    </source>
</evidence>
<evidence type="ECO:0000269" key="4">
    <source>
    </source>
</evidence>
<evidence type="ECO:0000269" key="5">
    <source>
    </source>
</evidence>
<evidence type="ECO:0000305" key="6"/>
<evidence type="ECO:0000305" key="7">
    <source>
    </source>
</evidence>
<feature type="chain" id="PRO_0000291785" description="Solute carrier family 25 member 33">
    <location>
        <begin position="1"/>
        <end position="321"/>
    </location>
</feature>
<feature type="transmembrane region" description="Helical; Name=1" evidence="1">
    <location>
        <begin position="12"/>
        <end position="32"/>
    </location>
</feature>
<feature type="transmembrane region" description="Helical; Name=2" evidence="1">
    <location>
        <begin position="49"/>
        <end position="65"/>
    </location>
</feature>
<feature type="transmembrane region" description="Helical; Name=3" evidence="1">
    <location>
        <begin position="121"/>
        <end position="141"/>
    </location>
</feature>
<feature type="transmembrane region" description="Helical; Name=4" evidence="1">
    <location>
        <begin position="190"/>
        <end position="210"/>
    </location>
</feature>
<feature type="transmembrane region" description="Helical; Name=5" evidence="1">
    <location>
        <begin position="233"/>
        <end position="253"/>
    </location>
</feature>
<feature type="transmembrane region" description="Helical; Name=6" evidence="1">
    <location>
        <begin position="298"/>
        <end position="318"/>
    </location>
</feature>
<feature type="repeat" description="Solcar 1">
    <location>
        <begin position="9"/>
        <end position="118"/>
    </location>
</feature>
<feature type="repeat" description="Solcar 2">
    <location>
        <begin position="126"/>
        <end position="213"/>
    </location>
</feature>
<feature type="repeat" description="Solcar 3">
    <location>
        <begin position="231"/>
        <end position="315"/>
    </location>
</feature>
<feature type="sequence variant" id="VAR_032861" description="In dbSNP:rs35819756.">
    <original>L</original>
    <variation>I</variation>
    <location>
        <position position="242"/>
    </location>
</feature>
<keyword id="KW-0472">Membrane</keyword>
<keyword id="KW-0496">Mitochondrion</keyword>
<keyword id="KW-0999">Mitochondrion inner membrane</keyword>
<keyword id="KW-1267">Proteomics identification</keyword>
<keyword id="KW-1185">Reference proteome</keyword>
<keyword id="KW-0677">Repeat</keyword>
<keyword id="KW-0812">Transmembrane</keyword>
<keyword id="KW-1133">Transmembrane helix</keyword>
<keyword id="KW-0813">Transport</keyword>
<gene>
    <name type="primary">SLC25A33</name>
</gene>
<dbReference type="EMBL" id="AF495714">
    <property type="protein sequence ID" value="AAM18051.1"/>
    <property type="molecule type" value="mRNA"/>
</dbReference>
<dbReference type="EMBL" id="AJ880283">
    <property type="protein sequence ID" value="CAI54244.1"/>
    <property type="molecule type" value="mRNA"/>
</dbReference>
<dbReference type="EMBL" id="AL954705">
    <property type="status" value="NOT_ANNOTATED_CDS"/>
    <property type="molecule type" value="Genomic_DNA"/>
</dbReference>
<dbReference type="EMBL" id="AL928921">
    <property type="status" value="NOT_ANNOTATED_CDS"/>
    <property type="molecule type" value="Genomic_DNA"/>
</dbReference>
<dbReference type="EMBL" id="BC004991">
    <property type="protein sequence ID" value="AAH04991.1"/>
    <property type="molecule type" value="mRNA"/>
</dbReference>
<dbReference type="EMBL" id="BC073135">
    <property type="protein sequence ID" value="AAH73135.1"/>
    <property type="molecule type" value="mRNA"/>
</dbReference>
<dbReference type="CCDS" id="CCDS103.1"/>
<dbReference type="RefSeq" id="NP_115691.1">
    <property type="nucleotide sequence ID" value="NM_032315.3"/>
</dbReference>
<dbReference type="SMR" id="Q9BSK2"/>
<dbReference type="BioGRID" id="124002">
    <property type="interactions" value="48"/>
</dbReference>
<dbReference type="FunCoup" id="Q9BSK2">
    <property type="interactions" value="1393"/>
</dbReference>
<dbReference type="IntAct" id="Q9BSK2">
    <property type="interactions" value="24"/>
</dbReference>
<dbReference type="MINT" id="Q9BSK2"/>
<dbReference type="STRING" id="9606.ENSP00000306328"/>
<dbReference type="TCDB" id="2.A.29.10.7">
    <property type="family name" value="the mitochondrial carrier (mc) family"/>
</dbReference>
<dbReference type="GlyGen" id="Q9BSK2">
    <property type="glycosylation" value="2 sites, 1 O-linked glycan (1 site)"/>
</dbReference>
<dbReference type="iPTMnet" id="Q9BSK2"/>
<dbReference type="PhosphoSitePlus" id="Q9BSK2"/>
<dbReference type="SwissPalm" id="Q9BSK2"/>
<dbReference type="BioMuta" id="SLC25A33"/>
<dbReference type="DMDM" id="74752304"/>
<dbReference type="jPOST" id="Q9BSK2"/>
<dbReference type="MassIVE" id="Q9BSK2"/>
<dbReference type="PaxDb" id="9606-ENSP00000306328"/>
<dbReference type="PeptideAtlas" id="Q9BSK2"/>
<dbReference type="ProteomicsDB" id="78911"/>
<dbReference type="Pumba" id="Q9BSK2"/>
<dbReference type="Antibodypedia" id="53479">
    <property type="antibodies" value="67 antibodies from 18 providers"/>
</dbReference>
<dbReference type="DNASU" id="84275"/>
<dbReference type="Ensembl" id="ENST00000302692.7">
    <property type="protein sequence ID" value="ENSP00000306328.5"/>
    <property type="gene ID" value="ENSG00000171612.7"/>
</dbReference>
<dbReference type="GeneID" id="84275"/>
<dbReference type="KEGG" id="hsa:84275"/>
<dbReference type="MANE-Select" id="ENST00000302692.7">
    <property type="protein sequence ID" value="ENSP00000306328.5"/>
    <property type="RefSeq nucleotide sequence ID" value="NM_032315.3"/>
    <property type="RefSeq protein sequence ID" value="NP_115691.1"/>
</dbReference>
<dbReference type="UCSC" id="uc001apw.4">
    <property type="organism name" value="human"/>
</dbReference>
<dbReference type="AGR" id="HGNC:29681"/>
<dbReference type="CTD" id="84275"/>
<dbReference type="DisGeNET" id="84275"/>
<dbReference type="GeneCards" id="SLC25A33"/>
<dbReference type="HGNC" id="HGNC:29681">
    <property type="gene designation" value="SLC25A33"/>
</dbReference>
<dbReference type="HPA" id="ENSG00000171612">
    <property type="expression patterns" value="Tissue enhanced (tongue)"/>
</dbReference>
<dbReference type="MIM" id="610816">
    <property type="type" value="gene"/>
</dbReference>
<dbReference type="neXtProt" id="NX_Q9BSK2"/>
<dbReference type="OpenTargets" id="ENSG00000171612"/>
<dbReference type="PharmGKB" id="PA162403588"/>
<dbReference type="VEuPathDB" id="HostDB:ENSG00000171612"/>
<dbReference type="eggNOG" id="KOG0757">
    <property type="taxonomic scope" value="Eukaryota"/>
</dbReference>
<dbReference type="GeneTree" id="ENSGT00940000158954"/>
<dbReference type="HOGENOM" id="CLU_015166_6_0_1"/>
<dbReference type="InParanoid" id="Q9BSK2"/>
<dbReference type="OMA" id="AFYNGMG"/>
<dbReference type="OrthoDB" id="269120at2759"/>
<dbReference type="PAN-GO" id="Q9BSK2">
    <property type="GO annotations" value="4 GO annotations based on evolutionary models"/>
</dbReference>
<dbReference type="PhylomeDB" id="Q9BSK2"/>
<dbReference type="TreeFam" id="TF314220"/>
<dbReference type="PathwayCommons" id="Q9BSK2"/>
<dbReference type="SignaLink" id="Q9BSK2"/>
<dbReference type="BioGRID-ORCS" id="84275">
    <property type="hits" value="63 hits in 1159 CRISPR screens"/>
</dbReference>
<dbReference type="ChiTaRS" id="SLC25A33">
    <property type="organism name" value="human"/>
</dbReference>
<dbReference type="GenomeRNAi" id="84275"/>
<dbReference type="Pharos" id="Q9BSK2">
    <property type="development level" value="Tbio"/>
</dbReference>
<dbReference type="PRO" id="PR:Q9BSK2"/>
<dbReference type="Proteomes" id="UP000005640">
    <property type="component" value="Chromosome 1"/>
</dbReference>
<dbReference type="RNAct" id="Q9BSK2">
    <property type="molecule type" value="protein"/>
</dbReference>
<dbReference type="Bgee" id="ENSG00000171612">
    <property type="expression patterns" value="Expressed in putamen and 100 other cell types or tissues"/>
</dbReference>
<dbReference type="GO" id="GO:0005743">
    <property type="term" value="C:mitochondrial inner membrane"/>
    <property type="evidence" value="ECO:0007669"/>
    <property type="project" value="UniProtKB-SubCell"/>
</dbReference>
<dbReference type="GO" id="GO:0031966">
    <property type="term" value="C:mitochondrial membrane"/>
    <property type="evidence" value="ECO:0000250"/>
    <property type="project" value="UniProtKB"/>
</dbReference>
<dbReference type="GO" id="GO:0005739">
    <property type="term" value="C:mitochondrion"/>
    <property type="evidence" value="ECO:0006056"/>
    <property type="project" value="FlyBase"/>
</dbReference>
<dbReference type="GO" id="GO:0015218">
    <property type="term" value="F:pyrimidine nucleotide transmembrane transporter activity"/>
    <property type="evidence" value="ECO:0000314"/>
    <property type="project" value="UniProtKB"/>
</dbReference>
<dbReference type="GO" id="GO:0032869">
    <property type="term" value="P:cellular response to insulin stimulus"/>
    <property type="evidence" value="ECO:0000314"/>
    <property type="project" value="UniProtKB"/>
</dbReference>
<dbReference type="GO" id="GO:1990314">
    <property type="term" value="P:cellular response to insulin-like growth factor stimulus"/>
    <property type="evidence" value="ECO:0000314"/>
    <property type="project" value="UniProtKB"/>
</dbReference>
<dbReference type="GO" id="GO:0031930">
    <property type="term" value="P:mitochondria-nucleus signaling pathway"/>
    <property type="evidence" value="ECO:0000250"/>
    <property type="project" value="UniProtKB"/>
</dbReference>
<dbReference type="GO" id="GO:0000002">
    <property type="term" value="P:mitochondrial genome maintenance"/>
    <property type="evidence" value="ECO:0000314"/>
    <property type="project" value="UniProtKB"/>
</dbReference>
<dbReference type="GO" id="GO:0034551">
    <property type="term" value="P:mitochondrial respiratory chain complex III assembly"/>
    <property type="evidence" value="ECO:0000315"/>
    <property type="project" value="UniProtKB"/>
</dbReference>
<dbReference type="GO" id="GO:0006390">
    <property type="term" value="P:mitochondrial transcription"/>
    <property type="evidence" value="ECO:0000315"/>
    <property type="project" value="UniProtKB"/>
</dbReference>
<dbReference type="GO" id="GO:0007005">
    <property type="term" value="P:mitochondrion organization"/>
    <property type="evidence" value="ECO:0000314"/>
    <property type="project" value="UniProtKB"/>
</dbReference>
<dbReference type="GO" id="GO:0030307">
    <property type="term" value="P:positive regulation of cell growth"/>
    <property type="evidence" value="ECO:0000315"/>
    <property type="project" value="UniProtKB"/>
</dbReference>
<dbReference type="GO" id="GO:0008284">
    <property type="term" value="P:positive regulation of cell population proliferation"/>
    <property type="evidence" value="ECO:0000315"/>
    <property type="project" value="UniProtKB"/>
</dbReference>
<dbReference type="GO" id="GO:1990519">
    <property type="term" value="P:pyrimidine nucleotide import into mitochondrion"/>
    <property type="evidence" value="ECO:0000315"/>
    <property type="project" value="UniProtKB"/>
</dbReference>
<dbReference type="GO" id="GO:0006864">
    <property type="term" value="P:pyrimidine nucleotide transport"/>
    <property type="evidence" value="ECO:0000314"/>
    <property type="project" value="UniProtKB"/>
</dbReference>
<dbReference type="GO" id="GO:0051881">
    <property type="term" value="P:regulation of mitochondrial membrane potential"/>
    <property type="evidence" value="ECO:0000314"/>
    <property type="project" value="UniProtKB"/>
</dbReference>
<dbReference type="GO" id="GO:0002082">
    <property type="term" value="P:regulation of oxidative phosphorylation"/>
    <property type="evidence" value="ECO:0000315"/>
    <property type="project" value="UniProtKB"/>
</dbReference>
<dbReference type="GO" id="GO:1903426">
    <property type="term" value="P:regulation of reactive oxygen species biosynthetic process"/>
    <property type="evidence" value="ECO:0000315"/>
    <property type="project" value="UniProtKB"/>
</dbReference>
<dbReference type="FunFam" id="1.50.40.10:FF:000028">
    <property type="entry name" value="Solute carrier family 25 member 33"/>
    <property type="match status" value="1"/>
</dbReference>
<dbReference type="FunFam" id="1.50.40.10:FF:000032">
    <property type="entry name" value="Solute carrier family 25 member 33"/>
    <property type="match status" value="1"/>
</dbReference>
<dbReference type="Gene3D" id="1.50.40.10">
    <property type="entry name" value="Mitochondrial carrier domain"/>
    <property type="match status" value="2"/>
</dbReference>
<dbReference type="InterPro" id="IPR018108">
    <property type="entry name" value="Mitochondrial_sb/sol_carrier"/>
</dbReference>
<dbReference type="InterPro" id="IPR023395">
    <property type="entry name" value="Mt_carrier_dom_sf"/>
</dbReference>
<dbReference type="InterPro" id="IPR049562">
    <property type="entry name" value="SLC25A33/36-like"/>
</dbReference>
<dbReference type="PANTHER" id="PTHR45829">
    <property type="entry name" value="MITOCHONDRIAL CARRIER PROTEIN RIM2"/>
    <property type="match status" value="1"/>
</dbReference>
<dbReference type="PANTHER" id="PTHR45829:SF5">
    <property type="entry name" value="SOLUTE CARRIER FAMILY 25 MEMBER 33"/>
    <property type="match status" value="1"/>
</dbReference>
<dbReference type="Pfam" id="PF00153">
    <property type="entry name" value="Mito_carr"/>
    <property type="match status" value="3"/>
</dbReference>
<dbReference type="SUPFAM" id="SSF103506">
    <property type="entry name" value="Mitochondrial carrier"/>
    <property type="match status" value="1"/>
</dbReference>
<dbReference type="PROSITE" id="PS50920">
    <property type="entry name" value="SOLCAR"/>
    <property type="match status" value="3"/>
</dbReference>
<accession>Q9BSK2</accession>
<organism>
    <name type="scientific">Homo sapiens</name>
    <name type="common">Human</name>
    <dbReference type="NCBI Taxonomy" id="9606"/>
    <lineage>
        <taxon>Eukaryota</taxon>
        <taxon>Metazoa</taxon>
        <taxon>Chordata</taxon>
        <taxon>Craniata</taxon>
        <taxon>Vertebrata</taxon>
        <taxon>Euteleostomi</taxon>
        <taxon>Mammalia</taxon>
        <taxon>Eutheria</taxon>
        <taxon>Euarchontoglires</taxon>
        <taxon>Primates</taxon>
        <taxon>Haplorrhini</taxon>
        <taxon>Catarrhini</taxon>
        <taxon>Hominidae</taxon>
        <taxon>Homo</taxon>
    </lineage>
</organism>
<comment type="function">
    <text evidence="2 3 4 5">Mitochondrial transporter that imports/exports pyrimidine nucleotides into and from mitochondria. Selectively transports uridine, thymidine, guanosine, cytosine and inosine (deoxy)nucleoside di- and triphosphates by an antiport mechanism (PubMed:25320081). May import (deoxy)nucleoside triphosphates in exchange for intramitochondrial (deoxy)nucleoside diphosphates, thus providing precursors necessary for de novo synthesis of mitochondrial DNA and RNA while exporting products of their catabolism (PubMed:25320081). Participates in mitochondrial genome maintenance, regulation of mitochondrial membrane potential and mitochondrial respiration (PubMed:20453889). Upon INS or IGF1 stimulation regulates cell growth and proliferation by controlling mitochondrial DNA replication and transcription, the ratio of mitochondria-to nuclear-encoded components of the electron transport chain resulting in control of mitochondrial ROS production (PubMed:17596519, PubMed:20453889). Participates in dendritic cell endocytosis and may associate with mitochondrial oxidative phosphorylation (PubMed:14715278).</text>
</comment>
<comment type="catalytic activity">
    <reaction evidence="5">
        <text>UTP(in) + UDP(out) = UTP(out) + UDP(in)</text>
        <dbReference type="Rhea" id="RHEA:73515"/>
        <dbReference type="ChEBI" id="CHEBI:46398"/>
        <dbReference type="ChEBI" id="CHEBI:58223"/>
    </reaction>
</comment>
<comment type="catalytic activity">
    <reaction evidence="5">
        <text>dUTP(out) + UTP(in) = dUTP(in) + UTP(out)</text>
        <dbReference type="Rhea" id="RHEA:73519"/>
        <dbReference type="ChEBI" id="CHEBI:46398"/>
        <dbReference type="ChEBI" id="CHEBI:61555"/>
    </reaction>
</comment>
<comment type="catalytic activity">
    <reaction evidence="5">
        <text>5-methyl-UTP(out) + UTP(in) = 5-methyl-UTP(in) + UTP(out)</text>
        <dbReference type="Rhea" id="RHEA:73523"/>
        <dbReference type="ChEBI" id="CHEBI:46398"/>
        <dbReference type="ChEBI" id="CHEBI:63527"/>
    </reaction>
</comment>
<comment type="catalytic activity">
    <reaction evidence="5">
        <text>5-methyl-UDP(out) + UTP(in) = 5-methyl-UDP(in) + UTP(out)</text>
        <dbReference type="Rhea" id="RHEA:73527"/>
        <dbReference type="ChEBI" id="CHEBI:46398"/>
        <dbReference type="ChEBI" id="CHEBI:61417"/>
    </reaction>
</comment>
<comment type="catalytic activity">
    <reaction evidence="5">
        <text>UTP(in) + CTP(out) = UTP(out) + CTP(in)</text>
        <dbReference type="Rhea" id="RHEA:73531"/>
        <dbReference type="ChEBI" id="CHEBI:37563"/>
        <dbReference type="ChEBI" id="CHEBI:46398"/>
    </reaction>
</comment>
<comment type="catalytic activity">
    <reaction evidence="5">
        <text>CDP(out) + UTP(in) = CDP(in) + UTP(out)</text>
        <dbReference type="Rhea" id="RHEA:73535"/>
        <dbReference type="ChEBI" id="CHEBI:46398"/>
        <dbReference type="ChEBI" id="CHEBI:58069"/>
    </reaction>
</comment>
<comment type="catalytic activity">
    <reaction evidence="5">
        <text>dCTP(out) + UTP(in) = dCTP(in) + UTP(out)</text>
        <dbReference type="Rhea" id="RHEA:73539"/>
        <dbReference type="ChEBI" id="CHEBI:46398"/>
        <dbReference type="ChEBI" id="CHEBI:61481"/>
    </reaction>
</comment>
<comment type="catalytic activity">
    <reaction evidence="5">
        <text>dCDP(out) + UTP(in) = dCDP(in) + UTP(out)</text>
        <dbReference type="Rhea" id="RHEA:73543"/>
        <dbReference type="ChEBI" id="CHEBI:46398"/>
        <dbReference type="ChEBI" id="CHEBI:58593"/>
    </reaction>
</comment>
<comment type="catalytic activity">
    <reaction evidence="5">
        <text>UTP(in) + GTP(out) = UTP(out) + GTP(in)</text>
        <dbReference type="Rhea" id="RHEA:73547"/>
        <dbReference type="ChEBI" id="CHEBI:37565"/>
        <dbReference type="ChEBI" id="CHEBI:46398"/>
    </reaction>
</comment>
<comment type="catalytic activity">
    <reaction evidence="5">
        <text>UTP(in) + GDP(out) = UTP(out) + GDP(in)</text>
        <dbReference type="Rhea" id="RHEA:73551"/>
        <dbReference type="ChEBI" id="CHEBI:46398"/>
        <dbReference type="ChEBI" id="CHEBI:58189"/>
    </reaction>
</comment>
<comment type="catalytic activity">
    <reaction evidence="5">
        <text>dGTP(out) + UTP(in) = dGTP(in) + UTP(out)</text>
        <dbReference type="Rhea" id="RHEA:73559"/>
        <dbReference type="ChEBI" id="CHEBI:46398"/>
        <dbReference type="ChEBI" id="CHEBI:61429"/>
    </reaction>
</comment>
<comment type="catalytic activity">
    <reaction evidence="5">
        <text>dGDP(out) + UTP(in) = dGDP(in) + UTP(out)</text>
        <dbReference type="Rhea" id="RHEA:73563"/>
        <dbReference type="ChEBI" id="CHEBI:46398"/>
        <dbReference type="ChEBI" id="CHEBI:58595"/>
    </reaction>
</comment>
<comment type="catalytic activity">
    <reaction evidence="5">
        <text>ITP(out) + UTP(in) = ITP(in) + UTP(out)</text>
        <dbReference type="Rhea" id="RHEA:73567"/>
        <dbReference type="ChEBI" id="CHEBI:46398"/>
        <dbReference type="ChEBI" id="CHEBI:61402"/>
    </reaction>
</comment>
<comment type="activity regulation">
    <text evidence="5">Inhibited by pyridoxal 5'-phosphate, 4,7-diphenyl-1,10-phenanthroline, tannic acid, and mercurials (mercury dichloride, mersalyl acid, p-hydroxymercuribenzoate).</text>
</comment>
<comment type="biophysicochemical properties">
    <kinetics>
        <KM evidence="5">0.16 mM for UTP (at 25 degrees Celsius)</KM>
        <KM evidence="5">0.18 mM for CTP (at 25 degrees Celsius)</KM>
        <KM evidence="5">0.08 mM for TTP (at 25 degrees Celsius)</KM>
        <KM evidence="5">0.3 mM for GTP (at 25 degrees Celsius)</KM>
        <Vmax evidence="5">98.5 umol/min/g enzyme toward UTP (at 25 degrees Celsius)</Vmax>
        <Vmax evidence="5">22.5 umol/min/g enzyme toward CTP (at 25 degrees Celsius)</Vmax>
        <Vmax evidence="5">50.8 umol/min/g enzyme toward TTP (at 25 degrees Celsius)</Vmax>
        <Vmax evidence="5">15.7 umol/min/g enzyme toward GTP (at 25 degrees Celsius)</Vmax>
        <text evidence="5">The inhibitory constants (Ki) of these compounds are 174 um (UTP), 195 um (CTP), 318 um (GTP), and 333 um (ITP). UTP is the best substrate.</text>
    </kinetics>
</comment>
<comment type="subcellular location">
    <subcellularLocation>
        <location evidence="7">Mitochondrion inner membrane</location>
        <topology evidence="1">Multi-pass membrane protein</topology>
    </subcellularLocation>
</comment>
<comment type="tissue specificity">
    <text evidence="2">Expressed in the central nervous system. Also expressed in testis and skeletal muscle. Weakly expressed in heart, liver, kidney, prostate, colon and peripheral blood leukocytes.</text>
</comment>
<comment type="induction">
    <text evidence="3">By INS or IGF1 through the PI-3 kinase/mTOR pathway.</text>
</comment>
<comment type="similarity">
    <text evidence="6">Belongs to the mitochondrial carrier (TC 2.A.29) family.</text>
</comment>
<reference key="1">
    <citation type="journal article" date="2004" name="Biochem. Biophys. Res. Commun.">
        <title>HuBMSC-MCP, a novel member of mitochondrial carrier superfamily, enhances dendritic cell endocytosis.</title>
        <authorList>
            <person name="Wang B."/>
            <person name="Li N."/>
            <person name="Sui L."/>
            <person name="Wu Y."/>
            <person name="Wang X."/>
            <person name="Wang Q."/>
            <person name="Xia D."/>
            <person name="Wan T."/>
            <person name="Cao X."/>
        </authorList>
    </citation>
    <scope>NUCLEOTIDE SEQUENCE [MRNA]</scope>
    <scope>FUNCTION</scope>
    <scope>SUBCELLULAR LOCATION</scope>
    <scope>TISSUE SPECIFICITY</scope>
</reference>
<reference key="2">
    <citation type="journal article" date="2007" name="Mol. Biol. Cell">
        <title>The insulin-like growth factor-I-mTOR signaling pathway induces the mitochondrial pyrimidine nucleotide carrier to promote cell growth.</title>
        <authorList>
            <person name="Floyd S."/>
            <person name="Favre C."/>
            <person name="Lasorsa F.M."/>
            <person name="Leahy M."/>
            <person name="Trigiante G."/>
            <person name="Stroebel P."/>
            <person name="Marx A."/>
            <person name="Loughran G."/>
            <person name="O'Callaghan K."/>
            <person name="Marobbio C.M."/>
            <person name="Slotboom D.J."/>
            <person name="Kunji E.R."/>
            <person name="Palmieri F."/>
            <person name="O'Connor R."/>
        </authorList>
    </citation>
    <scope>NUCLEOTIDE SEQUENCE [MRNA]</scope>
    <scope>INDUCTION</scope>
    <scope>FUNCTION</scope>
    <source>
        <tissue>Testis</tissue>
    </source>
</reference>
<reference key="3">
    <citation type="journal article" date="2006" name="Nature">
        <title>The DNA sequence and biological annotation of human chromosome 1.</title>
        <authorList>
            <person name="Gregory S.G."/>
            <person name="Barlow K.F."/>
            <person name="McLay K.E."/>
            <person name="Kaul R."/>
            <person name="Swarbreck D."/>
            <person name="Dunham A."/>
            <person name="Scott C.E."/>
            <person name="Howe K.L."/>
            <person name="Woodfine K."/>
            <person name="Spencer C.C.A."/>
            <person name="Jones M.C."/>
            <person name="Gillson C."/>
            <person name="Searle S."/>
            <person name="Zhou Y."/>
            <person name="Kokocinski F."/>
            <person name="McDonald L."/>
            <person name="Evans R."/>
            <person name="Phillips K."/>
            <person name="Atkinson A."/>
            <person name="Cooper R."/>
            <person name="Jones C."/>
            <person name="Hall R.E."/>
            <person name="Andrews T.D."/>
            <person name="Lloyd C."/>
            <person name="Ainscough R."/>
            <person name="Almeida J.P."/>
            <person name="Ambrose K.D."/>
            <person name="Anderson F."/>
            <person name="Andrew R.W."/>
            <person name="Ashwell R.I.S."/>
            <person name="Aubin K."/>
            <person name="Babbage A.K."/>
            <person name="Bagguley C.L."/>
            <person name="Bailey J."/>
            <person name="Beasley H."/>
            <person name="Bethel G."/>
            <person name="Bird C.P."/>
            <person name="Bray-Allen S."/>
            <person name="Brown J.Y."/>
            <person name="Brown A.J."/>
            <person name="Buckley D."/>
            <person name="Burton J."/>
            <person name="Bye J."/>
            <person name="Carder C."/>
            <person name="Chapman J.C."/>
            <person name="Clark S.Y."/>
            <person name="Clarke G."/>
            <person name="Clee C."/>
            <person name="Cobley V."/>
            <person name="Collier R.E."/>
            <person name="Corby N."/>
            <person name="Coville G.J."/>
            <person name="Davies J."/>
            <person name="Deadman R."/>
            <person name="Dunn M."/>
            <person name="Earthrowl M."/>
            <person name="Ellington A.G."/>
            <person name="Errington H."/>
            <person name="Frankish A."/>
            <person name="Frankland J."/>
            <person name="French L."/>
            <person name="Garner P."/>
            <person name="Garnett J."/>
            <person name="Gay L."/>
            <person name="Ghori M.R.J."/>
            <person name="Gibson R."/>
            <person name="Gilby L.M."/>
            <person name="Gillett W."/>
            <person name="Glithero R.J."/>
            <person name="Grafham D.V."/>
            <person name="Griffiths C."/>
            <person name="Griffiths-Jones S."/>
            <person name="Grocock R."/>
            <person name="Hammond S."/>
            <person name="Harrison E.S.I."/>
            <person name="Hart E."/>
            <person name="Haugen E."/>
            <person name="Heath P.D."/>
            <person name="Holmes S."/>
            <person name="Holt K."/>
            <person name="Howden P.J."/>
            <person name="Hunt A.R."/>
            <person name="Hunt S.E."/>
            <person name="Hunter G."/>
            <person name="Isherwood J."/>
            <person name="James R."/>
            <person name="Johnson C."/>
            <person name="Johnson D."/>
            <person name="Joy A."/>
            <person name="Kay M."/>
            <person name="Kershaw J.K."/>
            <person name="Kibukawa M."/>
            <person name="Kimberley A.M."/>
            <person name="King A."/>
            <person name="Knights A.J."/>
            <person name="Lad H."/>
            <person name="Laird G."/>
            <person name="Lawlor S."/>
            <person name="Leongamornlert D.A."/>
            <person name="Lloyd D.M."/>
            <person name="Loveland J."/>
            <person name="Lovell J."/>
            <person name="Lush M.J."/>
            <person name="Lyne R."/>
            <person name="Martin S."/>
            <person name="Mashreghi-Mohammadi M."/>
            <person name="Matthews L."/>
            <person name="Matthews N.S.W."/>
            <person name="McLaren S."/>
            <person name="Milne S."/>
            <person name="Mistry S."/>
            <person name="Moore M.J.F."/>
            <person name="Nickerson T."/>
            <person name="O'Dell C.N."/>
            <person name="Oliver K."/>
            <person name="Palmeiri A."/>
            <person name="Palmer S.A."/>
            <person name="Parker A."/>
            <person name="Patel D."/>
            <person name="Pearce A.V."/>
            <person name="Peck A.I."/>
            <person name="Pelan S."/>
            <person name="Phelps K."/>
            <person name="Phillimore B.J."/>
            <person name="Plumb R."/>
            <person name="Rajan J."/>
            <person name="Raymond C."/>
            <person name="Rouse G."/>
            <person name="Saenphimmachak C."/>
            <person name="Sehra H.K."/>
            <person name="Sheridan E."/>
            <person name="Shownkeen R."/>
            <person name="Sims S."/>
            <person name="Skuce C.D."/>
            <person name="Smith M."/>
            <person name="Steward C."/>
            <person name="Subramanian S."/>
            <person name="Sycamore N."/>
            <person name="Tracey A."/>
            <person name="Tromans A."/>
            <person name="Van Helmond Z."/>
            <person name="Wall M."/>
            <person name="Wallis J.M."/>
            <person name="White S."/>
            <person name="Whitehead S.L."/>
            <person name="Wilkinson J.E."/>
            <person name="Willey D.L."/>
            <person name="Williams H."/>
            <person name="Wilming L."/>
            <person name="Wray P.W."/>
            <person name="Wu Z."/>
            <person name="Coulson A."/>
            <person name="Vaudin M."/>
            <person name="Sulston J.E."/>
            <person name="Durbin R.M."/>
            <person name="Hubbard T."/>
            <person name="Wooster R."/>
            <person name="Dunham I."/>
            <person name="Carter N.P."/>
            <person name="McVean G."/>
            <person name="Ross M.T."/>
            <person name="Harrow J."/>
            <person name="Olson M.V."/>
            <person name="Beck S."/>
            <person name="Rogers J."/>
            <person name="Bentley D.R."/>
        </authorList>
    </citation>
    <scope>NUCLEOTIDE SEQUENCE [LARGE SCALE GENOMIC DNA]</scope>
</reference>
<reference key="4">
    <citation type="journal article" date="2004" name="Genome Res.">
        <title>The status, quality, and expansion of the NIH full-length cDNA project: the Mammalian Gene Collection (MGC).</title>
        <authorList>
            <consortium name="The MGC Project Team"/>
        </authorList>
    </citation>
    <scope>NUCLEOTIDE SEQUENCE [LARGE SCALE MRNA]</scope>
    <source>
        <tissue>Eye</tissue>
        <tissue>Skin</tissue>
    </source>
</reference>
<reference key="5">
    <citation type="journal article" date="2006" name="Genomics">
        <title>Fourteen novel human members of mitochondrial solute carrier family 25 (SLC25) widely expressed in the central nervous system.</title>
        <authorList>
            <person name="Haitina T."/>
            <person name="Lindblom J."/>
            <person name="Renstroem T."/>
            <person name="Fredriksson R."/>
        </authorList>
    </citation>
    <scope>IDENTIFICATION</scope>
</reference>
<reference key="6">
    <citation type="journal article" date="2010" name="Oncogene">
        <title>Mitochondrial pyrimidine nucleotide carrier (PNC1) regulates mitochondrial biogenesis and the invasive phenotype of cancer cells.</title>
        <authorList>
            <person name="Favre C."/>
            <person name="Zhdanov A."/>
            <person name="Leahy M."/>
            <person name="Papkovsky D."/>
            <person name="O'Connor R."/>
        </authorList>
    </citation>
    <scope>FUNCTION</scope>
</reference>
<reference key="7">
    <citation type="journal article" date="2011" name="BMC Syst. Biol.">
        <title>Initial characterization of the human central proteome.</title>
        <authorList>
            <person name="Burkard T.R."/>
            <person name="Planyavsky M."/>
            <person name="Kaupe I."/>
            <person name="Breitwieser F.P."/>
            <person name="Buerckstuemmer T."/>
            <person name="Bennett K.L."/>
            <person name="Superti-Furga G."/>
            <person name="Colinge J."/>
        </authorList>
    </citation>
    <scope>IDENTIFICATION BY MASS SPECTROMETRY [LARGE SCALE ANALYSIS]</scope>
</reference>
<reference key="8">
    <citation type="journal article" date="2014" name="J. Biol. Chem.">
        <title>The human SLC25A33 and SLC25A36 genes of solute carrier family 25 encode two mitochondrial pyrimidine nucleotide transporters.</title>
        <authorList>
            <person name="Di Noia M.A."/>
            <person name="Todisco S."/>
            <person name="Cirigliano A."/>
            <person name="Rinaldi T."/>
            <person name="Agrimi G."/>
            <person name="Iacobazzi V."/>
            <person name="Palmieri F."/>
        </authorList>
    </citation>
    <scope>FUNCTION</scope>
    <scope>TRANSPORT ACTIVITY</scope>
    <scope>ACTIVITY REGULATION</scope>
    <scope>BIOPHYSICOCHEMICAL PROPERTIES</scope>
</reference>
<sequence>MATGGQQKENTLLHLFAGGCGGTVGAIFTCPLEVIKTRLQSSRLALRTVYYPQVHLGTISGAGMVRPTSVTPGLFQVLKSILEKEGPKSLFRGLGPNLVGVAPSRAVYFACYSKAKEQFNGIFVPNSNIVHIFSAGSAAFITNSLMNPIWMVKTRMQLEQKVRGSKQMNTLQCARYVYQTEGIRGFYRGLTASYAGISETIICFAIYESLKKYLKEAPLASSANGTEKNSTSFFGLMAAAALSKGCASCIAYPHEVIRTRLREEGTKYKSFVQTARLVFREEGYLAFYRGLFAQLIRQIPNTAIVLSTYELIVYLLEDRTQ</sequence>